<accession>A0LY29</accession>
<name>TYSY_CHRFK</name>
<gene>
    <name evidence="1" type="primary">thyA</name>
    <name type="ordered locus">GFO_0288</name>
</gene>
<protein>
    <recommendedName>
        <fullName evidence="1">Thymidylate synthase</fullName>
        <shortName evidence="1">TS</shortName>
        <shortName evidence="1">TSase</shortName>
        <ecNumber evidence="1">2.1.1.45</ecNumber>
    </recommendedName>
</protein>
<dbReference type="EC" id="2.1.1.45" evidence="1"/>
<dbReference type="EMBL" id="CU207366">
    <property type="protein sequence ID" value="CAL65274.1"/>
    <property type="molecule type" value="Genomic_DNA"/>
</dbReference>
<dbReference type="RefSeq" id="WP_011708212.1">
    <property type="nucleotide sequence ID" value="NC_008571.1"/>
</dbReference>
<dbReference type="SMR" id="A0LY29"/>
<dbReference type="STRING" id="411154.GFO_0288"/>
<dbReference type="KEGG" id="gfo:GFO_0288"/>
<dbReference type="eggNOG" id="COG0207">
    <property type="taxonomic scope" value="Bacteria"/>
</dbReference>
<dbReference type="HOGENOM" id="CLU_021669_0_0_10"/>
<dbReference type="OrthoDB" id="9774633at2"/>
<dbReference type="UniPathway" id="UPA00575"/>
<dbReference type="Proteomes" id="UP000000755">
    <property type="component" value="Chromosome"/>
</dbReference>
<dbReference type="GO" id="GO:0005829">
    <property type="term" value="C:cytosol"/>
    <property type="evidence" value="ECO:0007669"/>
    <property type="project" value="TreeGrafter"/>
</dbReference>
<dbReference type="GO" id="GO:0004799">
    <property type="term" value="F:thymidylate synthase activity"/>
    <property type="evidence" value="ECO:0007669"/>
    <property type="project" value="UniProtKB-UniRule"/>
</dbReference>
<dbReference type="GO" id="GO:0006231">
    <property type="term" value="P:dTMP biosynthetic process"/>
    <property type="evidence" value="ECO:0007669"/>
    <property type="project" value="UniProtKB-UniRule"/>
</dbReference>
<dbReference type="GO" id="GO:0006235">
    <property type="term" value="P:dTTP biosynthetic process"/>
    <property type="evidence" value="ECO:0007669"/>
    <property type="project" value="UniProtKB-UniRule"/>
</dbReference>
<dbReference type="GO" id="GO:0032259">
    <property type="term" value="P:methylation"/>
    <property type="evidence" value="ECO:0007669"/>
    <property type="project" value="UniProtKB-KW"/>
</dbReference>
<dbReference type="CDD" id="cd00351">
    <property type="entry name" value="TS_Pyrimidine_HMase"/>
    <property type="match status" value="1"/>
</dbReference>
<dbReference type="FunFam" id="3.30.572.10:FF:000001">
    <property type="entry name" value="Thymidylate synthase"/>
    <property type="match status" value="1"/>
</dbReference>
<dbReference type="Gene3D" id="3.30.572.10">
    <property type="entry name" value="Thymidylate synthase/dCMP hydroxymethylase domain"/>
    <property type="match status" value="1"/>
</dbReference>
<dbReference type="HAMAP" id="MF_00008">
    <property type="entry name" value="Thymidy_synth_bact"/>
    <property type="match status" value="1"/>
</dbReference>
<dbReference type="InterPro" id="IPR045097">
    <property type="entry name" value="Thymidate_synth/dCMP_Mease"/>
</dbReference>
<dbReference type="InterPro" id="IPR023451">
    <property type="entry name" value="Thymidate_synth/dCMP_Mease_dom"/>
</dbReference>
<dbReference type="InterPro" id="IPR036926">
    <property type="entry name" value="Thymidate_synth/dCMP_Mease_sf"/>
</dbReference>
<dbReference type="InterPro" id="IPR000398">
    <property type="entry name" value="Thymidylate_synthase"/>
</dbReference>
<dbReference type="NCBIfam" id="NF002497">
    <property type="entry name" value="PRK01827.1-3"/>
    <property type="match status" value="1"/>
</dbReference>
<dbReference type="NCBIfam" id="NF002499">
    <property type="entry name" value="PRK01827.1-5"/>
    <property type="match status" value="1"/>
</dbReference>
<dbReference type="NCBIfam" id="TIGR03284">
    <property type="entry name" value="thym_sym"/>
    <property type="match status" value="2"/>
</dbReference>
<dbReference type="PANTHER" id="PTHR11548:SF9">
    <property type="entry name" value="THYMIDYLATE SYNTHASE"/>
    <property type="match status" value="1"/>
</dbReference>
<dbReference type="PANTHER" id="PTHR11548">
    <property type="entry name" value="THYMIDYLATE SYNTHASE 1"/>
    <property type="match status" value="1"/>
</dbReference>
<dbReference type="Pfam" id="PF00303">
    <property type="entry name" value="Thymidylat_synt"/>
    <property type="match status" value="1"/>
</dbReference>
<dbReference type="PRINTS" id="PR00108">
    <property type="entry name" value="THYMDSNTHASE"/>
</dbReference>
<dbReference type="SUPFAM" id="SSF55831">
    <property type="entry name" value="Thymidylate synthase/dCMP hydroxymethylase"/>
    <property type="match status" value="1"/>
</dbReference>
<reference key="1">
    <citation type="journal article" date="2006" name="Environ. Microbiol.">
        <title>Whole genome analysis of the marine Bacteroidetes'Gramella forsetii' reveals adaptations to degradation of polymeric organic matter.</title>
        <authorList>
            <person name="Bauer M."/>
            <person name="Kube M."/>
            <person name="Teeling H."/>
            <person name="Richter M."/>
            <person name="Lombardot T."/>
            <person name="Allers E."/>
            <person name="Wuerdemann C.A."/>
            <person name="Quast C."/>
            <person name="Kuhl H."/>
            <person name="Knaust F."/>
            <person name="Woebken D."/>
            <person name="Bischof K."/>
            <person name="Mussmann M."/>
            <person name="Choudhuri J.V."/>
            <person name="Meyer F."/>
            <person name="Reinhardt R."/>
            <person name="Amann R.I."/>
            <person name="Gloeckner F.O."/>
        </authorList>
    </citation>
    <scope>NUCLEOTIDE SEQUENCE [LARGE SCALE GENOMIC DNA]</scope>
    <source>
        <strain>DSM 17595 / CGMCC 1.15422 / KT0803</strain>
    </source>
</reference>
<feature type="chain" id="PRO_1000000604" description="Thymidylate synthase">
    <location>
        <begin position="1"/>
        <end position="274"/>
    </location>
</feature>
<feature type="active site" description="Nucleophile" evidence="1">
    <location>
        <position position="156"/>
    </location>
</feature>
<feature type="binding site" description="in other chain" evidence="1">
    <location>
        <position position="21"/>
    </location>
    <ligand>
        <name>dUMP</name>
        <dbReference type="ChEBI" id="CHEBI:246422"/>
        <note>ligand shared between dimeric partners</note>
    </ligand>
</feature>
<feature type="binding site" evidence="1">
    <location>
        <position position="51"/>
    </location>
    <ligand>
        <name>(6R)-5,10-methylene-5,6,7,8-tetrahydrofolate</name>
        <dbReference type="ChEBI" id="CHEBI:15636"/>
    </ligand>
</feature>
<feature type="binding site" evidence="1">
    <location>
        <begin position="123"/>
        <end position="124"/>
    </location>
    <ligand>
        <name>dUMP</name>
        <dbReference type="ChEBI" id="CHEBI:246422"/>
        <note>ligand shared between dimeric partners</note>
    </ligand>
</feature>
<feature type="binding site" description="in other chain" evidence="1">
    <location>
        <begin position="176"/>
        <end position="179"/>
    </location>
    <ligand>
        <name>dUMP</name>
        <dbReference type="ChEBI" id="CHEBI:246422"/>
        <note>ligand shared between dimeric partners</note>
    </ligand>
</feature>
<feature type="binding site" evidence="1">
    <location>
        <position position="179"/>
    </location>
    <ligand>
        <name>(6R)-5,10-methylene-5,6,7,8-tetrahydrofolate</name>
        <dbReference type="ChEBI" id="CHEBI:15636"/>
    </ligand>
</feature>
<feature type="binding site" description="in other chain" evidence="1">
    <location>
        <position position="187"/>
    </location>
    <ligand>
        <name>dUMP</name>
        <dbReference type="ChEBI" id="CHEBI:246422"/>
        <note>ligand shared between dimeric partners</note>
    </ligand>
</feature>
<feature type="binding site" description="in other chain" evidence="1">
    <location>
        <begin position="217"/>
        <end position="219"/>
    </location>
    <ligand>
        <name>dUMP</name>
        <dbReference type="ChEBI" id="CHEBI:246422"/>
        <note>ligand shared between dimeric partners</note>
    </ligand>
</feature>
<feature type="binding site" evidence="1">
    <location>
        <position position="273"/>
    </location>
    <ligand>
        <name>(6R)-5,10-methylene-5,6,7,8-tetrahydrofolate</name>
        <dbReference type="ChEBI" id="CHEBI:15636"/>
    </ligand>
</feature>
<keyword id="KW-0963">Cytoplasm</keyword>
<keyword id="KW-0489">Methyltransferase</keyword>
<keyword id="KW-0545">Nucleotide biosynthesis</keyword>
<keyword id="KW-0808">Transferase</keyword>
<proteinExistence type="inferred from homology"/>
<comment type="function">
    <text evidence="1">Catalyzes the reductive methylation of 2'-deoxyuridine-5'-monophosphate (dUMP) to 2'-deoxythymidine-5'-monophosphate (dTMP) while utilizing 5,10-methylenetetrahydrofolate (mTHF) as the methyl donor and reductant in the reaction, yielding dihydrofolate (DHF) as a by-product. This enzymatic reaction provides an intracellular de novo source of dTMP, an essential precursor for DNA biosynthesis.</text>
</comment>
<comment type="catalytic activity">
    <reaction evidence="1">
        <text>dUMP + (6R)-5,10-methylene-5,6,7,8-tetrahydrofolate = 7,8-dihydrofolate + dTMP</text>
        <dbReference type="Rhea" id="RHEA:12104"/>
        <dbReference type="ChEBI" id="CHEBI:15636"/>
        <dbReference type="ChEBI" id="CHEBI:57451"/>
        <dbReference type="ChEBI" id="CHEBI:63528"/>
        <dbReference type="ChEBI" id="CHEBI:246422"/>
        <dbReference type="EC" id="2.1.1.45"/>
    </reaction>
</comment>
<comment type="pathway">
    <text evidence="1">Pyrimidine metabolism; dTTP biosynthesis.</text>
</comment>
<comment type="subunit">
    <text evidence="1">Homodimer.</text>
</comment>
<comment type="subcellular location">
    <subcellularLocation>
        <location evidence="1">Cytoplasm</location>
    </subcellularLocation>
</comment>
<comment type="similarity">
    <text evidence="1">Belongs to the thymidylate synthase family. Bacterial-type ThyA subfamily.</text>
</comment>
<evidence type="ECO:0000255" key="1">
    <source>
        <dbReference type="HAMAP-Rule" id="MF_00008"/>
    </source>
</evidence>
<sequence>MKQYHDLLKHVLEQGAQKGDRTGTGTKSVFGYQMRFDLSEGFPMVTTKKLHLKSIIYELLWFLKGDTNIEYLKENGVRIWNEWADDNGDLGPVYGHQWRNWNGEEIDQIKEIVHSLKHNPNSRRMLVSAWNPSVLPDTSVSFSENVANGKAALPPCHAFFQFYVADGKLSCQLYQRSADIFLGVPFNIASYALLTMMMAQVCGYEAGDFIHTFGDAHIYSNHMEQVELQLSREPRQLPIMKINPEVKDIFDFKFEDFTLEDYDPHPGIKAKVAI</sequence>
<organism>
    <name type="scientific">Christiangramia forsetii (strain DSM 17595 / CGMCC 1.15422 / KT0803)</name>
    <name type="common">Gramella forsetii</name>
    <dbReference type="NCBI Taxonomy" id="411154"/>
    <lineage>
        <taxon>Bacteria</taxon>
        <taxon>Pseudomonadati</taxon>
        <taxon>Bacteroidota</taxon>
        <taxon>Flavobacteriia</taxon>
        <taxon>Flavobacteriales</taxon>
        <taxon>Flavobacteriaceae</taxon>
        <taxon>Christiangramia</taxon>
    </lineage>
</organism>